<organism>
    <name type="scientific">Rickettsia conorii (strain ATCC VR-613 / Malish 7)</name>
    <dbReference type="NCBI Taxonomy" id="272944"/>
    <lineage>
        <taxon>Bacteria</taxon>
        <taxon>Pseudomonadati</taxon>
        <taxon>Pseudomonadota</taxon>
        <taxon>Alphaproteobacteria</taxon>
        <taxon>Rickettsiales</taxon>
        <taxon>Rickettsiaceae</taxon>
        <taxon>Rickettsieae</taxon>
        <taxon>Rickettsia</taxon>
        <taxon>spotted fever group</taxon>
    </lineage>
</organism>
<dbReference type="EC" id="2.5.1.7" evidence="1"/>
<dbReference type="EMBL" id="AE006914">
    <property type="protein sequence ID" value="AAL03421.1"/>
    <property type="molecule type" value="Genomic_DNA"/>
</dbReference>
<dbReference type="PIR" id="C97810">
    <property type="entry name" value="C97810"/>
</dbReference>
<dbReference type="RefSeq" id="WP_010977487.1">
    <property type="nucleotide sequence ID" value="NC_003103.1"/>
</dbReference>
<dbReference type="SMR" id="Q92H88"/>
<dbReference type="GeneID" id="927856"/>
<dbReference type="KEGG" id="rco:RC0883"/>
<dbReference type="PATRIC" id="fig|272944.4.peg.1006"/>
<dbReference type="HOGENOM" id="CLU_027387_0_0_5"/>
<dbReference type="UniPathway" id="UPA00219"/>
<dbReference type="Proteomes" id="UP000000816">
    <property type="component" value="Chromosome"/>
</dbReference>
<dbReference type="GO" id="GO:0005737">
    <property type="term" value="C:cytoplasm"/>
    <property type="evidence" value="ECO:0007669"/>
    <property type="project" value="UniProtKB-SubCell"/>
</dbReference>
<dbReference type="GO" id="GO:0008760">
    <property type="term" value="F:UDP-N-acetylglucosamine 1-carboxyvinyltransferase activity"/>
    <property type="evidence" value="ECO:0007669"/>
    <property type="project" value="UniProtKB-UniRule"/>
</dbReference>
<dbReference type="GO" id="GO:0051301">
    <property type="term" value="P:cell division"/>
    <property type="evidence" value="ECO:0007669"/>
    <property type="project" value="UniProtKB-KW"/>
</dbReference>
<dbReference type="GO" id="GO:0071555">
    <property type="term" value="P:cell wall organization"/>
    <property type="evidence" value="ECO:0007669"/>
    <property type="project" value="UniProtKB-KW"/>
</dbReference>
<dbReference type="GO" id="GO:0009252">
    <property type="term" value="P:peptidoglycan biosynthetic process"/>
    <property type="evidence" value="ECO:0007669"/>
    <property type="project" value="UniProtKB-UniRule"/>
</dbReference>
<dbReference type="GO" id="GO:0008360">
    <property type="term" value="P:regulation of cell shape"/>
    <property type="evidence" value="ECO:0007669"/>
    <property type="project" value="UniProtKB-KW"/>
</dbReference>
<dbReference type="GO" id="GO:0019277">
    <property type="term" value="P:UDP-N-acetylgalactosamine biosynthetic process"/>
    <property type="evidence" value="ECO:0007669"/>
    <property type="project" value="InterPro"/>
</dbReference>
<dbReference type="CDD" id="cd01555">
    <property type="entry name" value="UdpNAET"/>
    <property type="match status" value="1"/>
</dbReference>
<dbReference type="FunFam" id="3.65.10.10:FF:000001">
    <property type="entry name" value="UDP-N-acetylglucosamine 1-carboxyvinyltransferase"/>
    <property type="match status" value="1"/>
</dbReference>
<dbReference type="Gene3D" id="3.65.10.10">
    <property type="entry name" value="Enolpyruvate transferase domain"/>
    <property type="match status" value="2"/>
</dbReference>
<dbReference type="HAMAP" id="MF_00111">
    <property type="entry name" value="MurA"/>
    <property type="match status" value="1"/>
</dbReference>
<dbReference type="InterPro" id="IPR001986">
    <property type="entry name" value="Enolpyruvate_Tfrase_dom"/>
</dbReference>
<dbReference type="InterPro" id="IPR036968">
    <property type="entry name" value="Enolpyruvate_Tfrase_sf"/>
</dbReference>
<dbReference type="InterPro" id="IPR050068">
    <property type="entry name" value="MurA_subfamily"/>
</dbReference>
<dbReference type="InterPro" id="IPR013792">
    <property type="entry name" value="RNA3'P_cycl/enolpyr_Trfase_a/b"/>
</dbReference>
<dbReference type="InterPro" id="IPR005750">
    <property type="entry name" value="UDP_GlcNAc_COvinyl_MurA"/>
</dbReference>
<dbReference type="NCBIfam" id="TIGR01072">
    <property type="entry name" value="murA"/>
    <property type="match status" value="1"/>
</dbReference>
<dbReference type="NCBIfam" id="NF006873">
    <property type="entry name" value="PRK09369.1"/>
    <property type="match status" value="1"/>
</dbReference>
<dbReference type="PANTHER" id="PTHR43783">
    <property type="entry name" value="UDP-N-ACETYLGLUCOSAMINE 1-CARBOXYVINYLTRANSFERASE"/>
    <property type="match status" value="1"/>
</dbReference>
<dbReference type="PANTHER" id="PTHR43783:SF1">
    <property type="entry name" value="UDP-N-ACETYLGLUCOSAMINE 1-CARBOXYVINYLTRANSFERASE"/>
    <property type="match status" value="1"/>
</dbReference>
<dbReference type="Pfam" id="PF00275">
    <property type="entry name" value="EPSP_synthase"/>
    <property type="match status" value="1"/>
</dbReference>
<dbReference type="SUPFAM" id="SSF55205">
    <property type="entry name" value="EPT/RTPC-like"/>
    <property type="match status" value="1"/>
</dbReference>
<comment type="function">
    <text evidence="1">Cell wall formation. Adds enolpyruvyl to UDP-N-acetylglucosamine.</text>
</comment>
<comment type="catalytic activity">
    <reaction evidence="1">
        <text>phosphoenolpyruvate + UDP-N-acetyl-alpha-D-glucosamine = UDP-N-acetyl-3-O-(1-carboxyvinyl)-alpha-D-glucosamine + phosphate</text>
        <dbReference type="Rhea" id="RHEA:18681"/>
        <dbReference type="ChEBI" id="CHEBI:43474"/>
        <dbReference type="ChEBI" id="CHEBI:57705"/>
        <dbReference type="ChEBI" id="CHEBI:58702"/>
        <dbReference type="ChEBI" id="CHEBI:68483"/>
        <dbReference type="EC" id="2.5.1.7"/>
    </reaction>
</comment>
<comment type="pathway">
    <text evidence="1">Cell wall biogenesis; peptidoglycan biosynthesis.</text>
</comment>
<comment type="subcellular location">
    <subcellularLocation>
        <location evidence="1">Cytoplasm</location>
    </subcellularLocation>
</comment>
<comment type="similarity">
    <text evidence="1">Belongs to the EPSP synthase family. MurA subfamily.</text>
</comment>
<reference key="1">
    <citation type="journal article" date="2001" name="Science">
        <title>Mechanisms of evolution in Rickettsia conorii and R. prowazekii.</title>
        <authorList>
            <person name="Ogata H."/>
            <person name="Audic S."/>
            <person name="Renesto-Audiffren P."/>
            <person name="Fournier P.-E."/>
            <person name="Barbe V."/>
            <person name="Samson D."/>
            <person name="Roux V."/>
            <person name="Cossart P."/>
            <person name="Weissenbach J."/>
            <person name="Claverie J.-M."/>
            <person name="Raoult D."/>
        </authorList>
    </citation>
    <scope>NUCLEOTIDE SEQUENCE [LARGE SCALE GENOMIC DNA]</scope>
    <source>
        <strain>ATCC VR-613 / Malish 7</strain>
    </source>
</reference>
<protein>
    <recommendedName>
        <fullName evidence="1">UDP-N-acetylglucosamine 1-carboxyvinyltransferase</fullName>
        <ecNumber evidence="1">2.5.1.7</ecNumber>
    </recommendedName>
    <alternativeName>
        <fullName evidence="1">Enoylpyruvate transferase</fullName>
    </alternativeName>
    <alternativeName>
        <fullName evidence="1">UDP-N-acetylglucosamine enolpyruvyl transferase</fullName>
        <shortName evidence="1">EPT</shortName>
    </alternativeName>
</protein>
<accession>Q92H88</accession>
<name>MURA_RICCN</name>
<evidence type="ECO:0000255" key="1">
    <source>
        <dbReference type="HAMAP-Rule" id="MF_00111"/>
    </source>
</evidence>
<feature type="chain" id="PRO_0000178909" description="UDP-N-acetylglucosamine 1-carboxyvinyltransferase">
    <location>
        <begin position="1"/>
        <end position="419"/>
    </location>
</feature>
<feature type="active site" description="Proton donor" evidence="1">
    <location>
        <position position="119"/>
    </location>
</feature>
<feature type="binding site" evidence="1">
    <location>
        <begin position="22"/>
        <end position="23"/>
    </location>
    <ligand>
        <name>phosphoenolpyruvate</name>
        <dbReference type="ChEBI" id="CHEBI:58702"/>
    </ligand>
</feature>
<feature type="binding site" evidence="1">
    <location>
        <position position="95"/>
    </location>
    <ligand>
        <name>UDP-N-acetyl-alpha-D-glucosamine</name>
        <dbReference type="ChEBI" id="CHEBI:57705"/>
    </ligand>
</feature>
<feature type="binding site" evidence="1">
    <location>
        <begin position="164"/>
        <end position="167"/>
    </location>
    <ligand>
        <name>UDP-N-acetyl-alpha-D-glucosamine</name>
        <dbReference type="ChEBI" id="CHEBI:57705"/>
    </ligand>
</feature>
<feature type="binding site" evidence="1">
    <location>
        <position position="308"/>
    </location>
    <ligand>
        <name>UDP-N-acetyl-alpha-D-glucosamine</name>
        <dbReference type="ChEBI" id="CHEBI:57705"/>
    </ligand>
</feature>
<feature type="binding site" evidence="1">
    <location>
        <position position="330"/>
    </location>
    <ligand>
        <name>UDP-N-acetyl-alpha-D-glucosamine</name>
        <dbReference type="ChEBI" id="CHEBI:57705"/>
    </ligand>
</feature>
<feature type="modified residue" description="2-(S-cysteinyl)pyruvic acid O-phosphothioketal" evidence="1">
    <location>
        <position position="119"/>
    </location>
</feature>
<proteinExistence type="inferred from homology"/>
<sequence length="419" mass="45466">MHKLIIHGGTPLKGIINISGAKNAVLPIMAASILTDKLHITNVPKLTDVSTMKDLLRSHGADIEIIEHQDEFELIIDTKNINNFTADYEIVRKMRASIWVLGPLLTKYGKAKVSLPGGCAIGARQVDLHIAVLKAMGAEIEIEDGYINASSKGRLKGTHFVFDKVSVGATINAILAAVLAEGETMLFNCGREPEIVDLCNCLITMGADIAGIGTSEITIKGKDSLNKASYKVLSDRIEAGTYMFAAAITKGDVKICRIDYHIVENIALKLIETGIKVVPINNGVQVTYEGKLNSVDLETNPYPGFATDLQAQFMSLMTLSSGVSMITENIFENRFMHVPELCRMGADIVVRGNKAVVRGVEMLKGAEVMASDLRASVSLILAGLSTNSKTVLHRIYHLDRGFQDLEKKLSNCGADIKRV</sequence>
<keyword id="KW-0131">Cell cycle</keyword>
<keyword id="KW-0132">Cell division</keyword>
<keyword id="KW-0133">Cell shape</keyword>
<keyword id="KW-0961">Cell wall biogenesis/degradation</keyword>
<keyword id="KW-0963">Cytoplasm</keyword>
<keyword id="KW-0573">Peptidoglycan synthesis</keyword>
<keyword id="KW-0670">Pyruvate</keyword>
<keyword id="KW-0808">Transferase</keyword>
<gene>
    <name evidence="1" type="primary">murA</name>
    <name type="ordered locus">RC0883</name>
</gene>